<keyword id="KW-0456">Lyase</keyword>
<sequence length="262" mass="28158">MNPDVNAISPAEARRRFRDGLVTPTAGWSAGYAQANLIAVPRDYAFDLMLFAQRNPKPCPVLDVLEPGQYAGPLLAGGDIRTDIPAYRIYVDGELVTEVADATEYWTDDLVAFLIGCSFSFEAALLDSGVPVRHIEEDVNVPMYRTDRPCRSAGRIGGPLVVSMRPLPPEQVADAVRITSRYPSVHGTPVHVGDPAGLGIAHLSAPDYGDAVTIRPGEIPVFWACGVTPQAAVMQSRPPLAIGHAPGHMLITDLRDSELVVP</sequence>
<evidence type="ECO:0000255" key="1">
    <source>
        <dbReference type="HAMAP-Rule" id="MF_01830"/>
    </source>
</evidence>
<protein>
    <recommendedName>
        <fullName evidence="1">Putative hydro-lyase Mflv_5194</fullName>
        <ecNumber evidence="1">4.2.1.-</ecNumber>
    </recommendedName>
</protein>
<name>Y5194_MYCGI</name>
<proteinExistence type="inferred from homology"/>
<dbReference type="EC" id="4.2.1.-" evidence="1"/>
<dbReference type="EMBL" id="CP000656">
    <property type="protein sequence ID" value="ABP47660.1"/>
    <property type="molecule type" value="Genomic_DNA"/>
</dbReference>
<dbReference type="SMR" id="A4T1E2"/>
<dbReference type="STRING" id="350054.Mflv_5194"/>
<dbReference type="KEGG" id="mgi:Mflv_5194"/>
<dbReference type="eggNOG" id="COG4336">
    <property type="taxonomic scope" value="Bacteria"/>
</dbReference>
<dbReference type="HOGENOM" id="CLU_059759_0_0_11"/>
<dbReference type="OrthoDB" id="149585at2"/>
<dbReference type="GO" id="GO:0016829">
    <property type="term" value="F:lyase activity"/>
    <property type="evidence" value="ECO:0007669"/>
    <property type="project" value="UniProtKB-KW"/>
</dbReference>
<dbReference type="FunFam" id="3.30.2040.10:FF:000001">
    <property type="entry name" value="D-glutamate cyclase, mitochondrial"/>
    <property type="match status" value="1"/>
</dbReference>
<dbReference type="Gene3D" id="3.40.1640.10">
    <property type="entry name" value="PSTPO5379-like"/>
    <property type="match status" value="1"/>
</dbReference>
<dbReference type="Gene3D" id="3.30.2040.10">
    <property type="entry name" value="PSTPO5379-like domain"/>
    <property type="match status" value="1"/>
</dbReference>
<dbReference type="HAMAP" id="MF_01830">
    <property type="entry name" value="Hydro_lyase"/>
    <property type="match status" value="1"/>
</dbReference>
<dbReference type="InterPro" id="IPR009906">
    <property type="entry name" value="D-Glu_cyclase"/>
</dbReference>
<dbReference type="InterPro" id="IPR038021">
    <property type="entry name" value="Putative_hydro-lyase"/>
</dbReference>
<dbReference type="InterPro" id="IPR016938">
    <property type="entry name" value="UPF0317"/>
</dbReference>
<dbReference type="NCBIfam" id="NF003969">
    <property type="entry name" value="PRK05463.1"/>
    <property type="match status" value="1"/>
</dbReference>
<dbReference type="PANTHER" id="PTHR32022">
    <property type="entry name" value="D-GLUTAMATE CYCLASE, MITOCHONDRIAL"/>
    <property type="match status" value="1"/>
</dbReference>
<dbReference type="PANTHER" id="PTHR32022:SF10">
    <property type="entry name" value="D-GLUTAMATE CYCLASE, MITOCHONDRIAL"/>
    <property type="match status" value="1"/>
</dbReference>
<dbReference type="Pfam" id="PF07286">
    <property type="entry name" value="D-Glu_cyclase"/>
    <property type="match status" value="1"/>
</dbReference>
<dbReference type="PIRSF" id="PIRSF029755">
    <property type="entry name" value="UCP029755"/>
    <property type="match status" value="1"/>
</dbReference>
<dbReference type="SUPFAM" id="SSF160920">
    <property type="entry name" value="PSTPO5379-like"/>
    <property type="match status" value="1"/>
</dbReference>
<gene>
    <name type="ordered locus">Mflv_5194</name>
</gene>
<comment type="similarity">
    <text evidence="1">Belongs to the D-glutamate cyclase family.</text>
</comment>
<organism>
    <name type="scientific">Mycolicibacterium gilvum (strain PYR-GCK)</name>
    <name type="common">Mycobacterium gilvum (strain PYR-GCK)</name>
    <dbReference type="NCBI Taxonomy" id="350054"/>
    <lineage>
        <taxon>Bacteria</taxon>
        <taxon>Bacillati</taxon>
        <taxon>Actinomycetota</taxon>
        <taxon>Actinomycetes</taxon>
        <taxon>Mycobacteriales</taxon>
        <taxon>Mycobacteriaceae</taxon>
        <taxon>Mycolicibacterium</taxon>
    </lineage>
</organism>
<reference key="1">
    <citation type="submission" date="2007-04" db="EMBL/GenBank/DDBJ databases">
        <title>Complete sequence of chromosome of Mycobacterium gilvum PYR-GCK.</title>
        <authorList>
            <consortium name="US DOE Joint Genome Institute"/>
            <person name="Copeland A."/>
            <person name="Lucas S."/>
            <person name="Lapidus A."/>
            <person name="Barry K."/>
            <person name="Detter J.C."/>
            <person name="Glavina del Rio T."/>
            <person name="Hammon N."/>
            <person name="Israni S."/>
            <person name="Dalin E."/>
            <person name="Tice H."/>
            <person name="Pitluck S."/>
            <person name="Chain P."/>
            <person name="Malfatti S."/>
            <person name="Shin M."/>
            <person name="Vergez L."/>
            <person name="Schmutz J."/>
            <person name="Larimer F."/>
            <person name="Land M."/>
            <person name="Hauser L."/>
            <person name="Kyrpides N."/>
            <person name="Mikhailova N."/>
            <person name="Miller C."/>
            <person name="Richardson P."/>
        </authorList>
    </citation>
    <scope>NUCLEOTIDE SEQUENCE [LARGE SCALE GENOMIC DNA]</scope>
    <source>
        <strain>PYR-GCK</strain>
    </source>
</reference>
<accession>A4T1E2</accession>
<feature type="chain" id="PRO_0000379846" description="Putative hydro-lyase Mflv_5194">
    <location>
        <begin position="1"/>
        <end position="262"/>
    </location>
</feature>